<dbReference type="EC" id="7.-.-.-"/>
<dbReference type="EMBL" id="AE000512">
    <property type="protein sequence ID" value="AAD35314.1"/>
    <property type="molecule type" value="Genomic_DNA"/>
</dbReference>
<dbReference type="PIR" id="A72401">
    <property type="entry name" value="A72401"/>
</dbReference>
<dbReference type="RefSeq" id="NP_228037.1">
    <property type="nucleotide sequence ID" value="NC_000853.1"/>
</dbReference>
<dbReference type="RefSeq" id="WP_004082907.1">
    <property type="nucleotide sequence ID" value="NC_000853.1"/>
</dbReference>
<dbReference type="PDB" id="2YZ2">
    <property type="method" value="X-ray"/>
    <property type="resolution" value="2.30 A"/>
    <property type="chains" value="A/B=1-266"/>
</dbReference>
<dbReference type="PDB" id="4HLU">
    <property type="method" value="X-ray"/>
    <property type="resolution" value="2.70 A"/>
    <property type="chains" value="A/B=2-266"/>
</dbReference>
<dbReference type="PDB" id="4ZIR">
    <property type="method" value="X-ray"/>
    <property type="resolution" value="3.00 A"/>
    <property type="chains" value="A=2-266"/>
</dbReference>
<dbReference type="PDBsum" id="2YZ2"/>
<dbReference type="PDBsum" id="4HLU"/>
<dbReference type="PDBsum" id="4ZIR"/>
<dbReference type="SMR" id="Q9WY65"/>
<dbReference type="DIP" id="DIP-61612N"/>
<dbReference type="FunCoup" id="Q9WY65">
    <property type="interactions" value="250"/>
</dbReference>
<dbReference type="IntAct" id="Q9WY65">
    <property type="interactions" value="1"/>
</dbReference>
<dbReference type="STRING" id="243274.TM_0222"/>
<dbReference type="TCDB" id="3.A.1.25.5">
    <property type="family name" value="the atp-binding cassette (abc) superfamily"/>
</dbReference>
<dbReference type="PaxDb" id="243274-THEMA_03615"/>
<dbReference type="EnsemblBacteria" id="AAD35314">
    <property type="protein sequence ID" value="AAD35314"/>
    <property type="gene ID" value="TM_0222"/>
</dbReference>
<dbReference type="KEGG" id="tma:TM0222"/>
<dbReference type="KEGG" id="tmi:THEMA_03615"/>
<dbReference type="KEGG" id="tmm:Tmari_0220"/>
<dbReference type="KEGG" id="tmw:THMA_0229"/>
<dbReference type="eggNOG" id="COG1122">
    <property type="taxonomic scope" value="Bacteria"/>
</dbReference>
<dbReference type="InParanoid" id="Q9WY65"/>
<dbReference type="OrthoDB" id="9784332at2"/>
<dbReference type="EvolutionaryTrace" id="Q9WY65"/>
<dbReference type="Proteomes" id="UP000008183">
    <property type="component" value="Chromosome"/>
</dbReference>
<dbReference type="GO" id="GO:0043190">
    <property type="term" value="C:ATP-binding cassette (ABC) transporter complex"/>
    <property type="evidence" value="ECO:0000318"/>
    <property type="project" value="GO_Central"/>
</dbReference>
<dbReference type="GO" id="GO:0005886">
    <property type="term" value="C:plasma membrane"/>
    <property type="evidence" value="ECO:0000314"/>
    <property type="project" value="UniProtKB"/>
</dbReference>
<dbReference type="GO" id="GO:0005524">
    <property type="term" value="F:ATP binding"/>
    <property type="evidence" value="ECO:0000314"/>
    <property type="project" value="UniProtKB"/>
</dbReference>
<dbReference type="GO" id="GO:0016887">
    <property type="term" value="F:ATP hydrolysis activity"/>
    <property type="evidence" value="ECO:0007669"/>
    <property type="project" value="InterPro"/>
</dbReference>
<dbReference type="GO" id="GO:0042626">
    <property type="term" value="F:ATPase-coupled transmembrane transporter activity"/>
    <property type="evidence" value="ECO:0000318"/>
    <property type="project" value="GO_Central"/>
</dbReference>
<dbReference type="GO" id="GO:0032217">
    <property type="term" value="F:riboflavin transmembrane transporter activity"/>
    <property type="evidence" value="ECO:0000316"/>
    <property type="project" value="UniProtKB"/>
</dbReference>
<dbReference type="GO" id="GO:0032218">
    <property type="term" value="P:riboflavin transport"/>
    <property type="evidence" value="ECO:0000316"/>
    <property type="project" value="UniProtKB"/>
</dbReference>
<dbReference type="CDD" id="cd03225">
    <property type="entry name" value="ABC_cobalt_CbiO_domain1"/>
    <property type="match status" value="1"/>
</dbReference>
<dbReference type="Gene3D" id="3.40.50.300">
    <property type="entry name" value="P-loop containing nucleotide triphosphate hydrolases"/>
    <property type="match status" value="1"/>
</dbReference>
<dbReference type="InterPro" id="IPR003593">
    <property type="entry name" value="AAA+_ATPase"/>
</dbReference>
<dbReference type="InterPro" id="IPR003439">
    <property type="entry name" value="ABC_transporter-like_ATP-bd"/>
</dbReference>
<dbReference type="InterPro" id="IPR017871">
    <property type="entry name" value="ABC_transporter-like_CS"/>
</dbReference>
<dbReference type="InterPro" id="IPR015856">
    <property type="entry name" value="ABC_transpr_CbiO/EcfA_su"/>
</dbReference>
<dbReference type="InterPro" id="IPR050095">
    <property type="entry name" value="ECF_ABC_transporter_ATP-bd"/>
</dbReference>
<dbReference type="InterPro" id="IPR027417">
    <property type="entry name" value="P-loop_NTPase"/>
</dbReference>
<dbReference type="PANTHER" id="PTHR43553:SF27">
    <property type="entry name" value="ENERGY-COUPLING FACTOR TRANSPORTER ATP-BINDING PROTEIN ECFA2"/>
    <property type="match status" value="1"/>
</dbReference>
<dbReference type="PANTHER" id="PTHR43553">
    <property type="entry name" value="HEAVY METAL TRANSPORTER"/>
    <property type="match status" value="1"/>
</dbReference>
<dbReference type="Pfam" id="PF00005">
    <property type="entry name" value="ABC_tran"/>
    <property type="match status" value="1"/>
</dbReference>
<dbReference type="SMART" id="SM00382">
    <property type="entry name" value="AAA"/>
    <property type="match status" value="1"/>
</dbReference>
<dbReference type="SUPFAM" id="SSF52540">
    <property type="entry name" value="P-loop containing nucleoside triphosphate hydrolases"/>
    <property type="match status" value="1"/>
</dbReference>
<dbReference type="PROSITE" id="PS00211">
    <property type="entry name" value="ABC_TRANSPORTER_1"/>
    <property type="match status" value="1"/>
</dbReference>
<dbReference type="PROSITE" id="PS50893">
    <property type="entry name" value="ABC_TRANSPORTER_2"/>
    <property type="match status" value="1"/>
</dbReference>
<sequence length="266" mass="30233">MRIEVVNVSHIFHRGTPLEKKALENVSLVINEGECLLVAGNTGSGKSTLLQIVAGLIEPTSGDVLYDGERKKGYEIRRNIGIAFQYPEDQFFAERVFDEVAFAVKNFYPDRDPVPLVKKAMEFVGLDFDSFKDRVPFFLSGGEKRRVAIASVIVHEPDILILDEPLVGLDREGKTDLLRIVEKWKTLGKTVILISHDIETVINHVDRVVVLEKGKKVFDGTRMEFLEKYDPRFFTSKMLVMRRLVLKGEDPFSMSDDELLERVCNS</sequence>
<proteinExistence type="evidence at protein level"/>
<gene>
    <name type="primary">ecfA2</name>
    <name type="synonym">ecfA</name>
    <name type="synonym">ecfA'</name>
    <name type="ordered locus">TM_0222</name>
</gene>
<name>ECFA2_THEMA</name>
<protein>
    <recommendedName>
        <fullName>Energy-coupling factor transporter ATP-binding protein EcfA2</fullName>
        <shortName>ECF transporter A component EcfA2</shortName>
        <ecNumber>7.-.-.-</ecNumber>
    </recommendedName>
</protein>
<organism>
    <name type="scientific">Thermotoga maritima (strain ATCC 43589 / DSM 3109 / JCM 10099 / NBRC 100826 / MSB8)</name>
    <dbReference type="NCBI Taxonomy" id="243274"/>
    <lineage>
        <taxon>Bacteria</taxon>
        <taxon>Thermotogati</taxon>
        <taxon>Thermotogota</taxon>
        <taxon>Thermotogae</taxon>
        <taxon>Thermotogales</taxon>
        <taxon>Thermotogaceae</taxon>
        <taxon>Thermotoga</taxon>
    </lineage>
</organism>
<reference key="1">
    <citation type="journal article" date="1999" name="Nature">
        <title>Evidence for lateral gene transfer between Archaea and Bacteria from genome sequence of Thermotoga maritima.</title>
        <authorList>
            <person name="Nelson K.E."/>
            <person name="Clayton R.A."/>
            <person name="Gill S.R."/>
            <person name="Gwinn M.L."/>
            <person name="Dodson R.J."/>
            <person name="Haft D.H."/>
            <person name="Hickey E.K."/>
            <person name="Peterson J.D."/>
            <person name="Nelson W.C."/>
            <person name="Ketchum K.A."/>
            <person name="McDonald L.A."/>
            <person name="Utterback T.R."/>
            <person name="Malek J.A."/>
            <person name="Linher K.D."/>
            <person name="Garrett M.M."/>
            <person name="Stewart A.M."/>
            <person name="Cotton M.D."/>
            <person name="Pratt M.S."/>
            <person name="Phillips C.A."/>
            <person name="Richardson D.L."/>
            <person name="Heidelberg J.F."/>
            <person name="Sutton G.G."/>
            <person name="Fleischmann R.D."/>
            <person name="Eisen J.A."/>
            <person name="White O."/>
            <person name="Salzberg S.L."/>
            <person name="Smith H.O."/>
            <person name="Venter J.C."/>
            <person name="Fraser C.M."/>
        </authorList>
    </citation>
    <scope>NUCLEOTIDE SEQUENCE [LARGE SCALE GENOMIC DNA]</scope>
    <source>
        <strain>ATCC 43589 / DSM 3109 / JCM 10099 / NBRC 100826 / MSB8</strain>
    </source>
</reference>
<reference key="2">
    <citation type="journal article" date="2008" name="Acta Crystallogr. F">
        <title>Purification, crystallization and preliminary X-ray diffraction analysis of the putative ABC transporter ATP-binding protein from Thermotoga maritima.</title>
        <authorList>
            <person name="Ethayathulla A.S."/>
            <person name="Bessho Y."/>
            <person name="Shinkai A."/>
            <person name="Padmanabhan B."/>
            <person name="Singh T.P."/>
            <person name="Kaur P."/>
            <person name="Yokoyama S."/>
        </authorList>
    </citation>
    <scope>X-RAY CRYSTALLOGRAPHY (2.3 ANGSTROMS)</scope>
    <source>
        <strain>ATCC 43589 / DSM 3109 / JCM 10099 / NBRC 100826 / MSB8</strain>
    </source>
</reference>
<reference key="3">
    <citation type="journal article" date="2013" name="Proc. Natl. Acad. Sci. U.S.A.">
        <title>Assembly and mechanism of a group II ECF transporter.</title>
        <authorList>
            <person name="Karpowich N.K."/>
            <person name="Wang D.N."/>
        </authorList>
    </citation>
    <scope>FUNCTION AS A TRANSPORT COMPONENT</scope>
    <scope>SUBUNIT</scope>
    <scope>SUBCELLULAR LOCATION</scope>
    <scope>EXPRESSION IN E.COLI</scope>
    <scope>ATP-BINDING</scope>
    <scope>X-RAY CRYSTALLOGRAPHY (2.7 ANGSTROMS) OF 2-266 IN COMPLEX WITH ADP</scope>
    <source>
        <strain>ATCC 43589 / DSM 3109 / JCM 10099 / NBRC 100826 / MSB8</strain>
    </source>
</reference>
<accession>Q9WY65</accession>
<comment type="function">
    <text evidence="3 4">ATP-binding (A) component of a common energy-coupling factor (ECF) ABC-transporter complex. Unlike classic ABC transporters this ECF transporter provides the energy necessary to transport a number of different substrates (Probable). Expression of the complex plus RibU in E.coli allows riboflavin uptake; uptake does not occur in the absence of RibU or the EcfA1A2T complex.</text>
</comment>
<comment type="subunit">
    <text evidence="3">Forms a heterodimer with EcfA1. Forms a stable energy-coupling factor (ECF) transporter complex composed of 2 membrane-embedded substrate-binding proteins (S component, RibU, BioY), 2 ATP-binding proteins (A component) and 2 transmembrane proteins (T component) upon coexpression in E.coli. Stable subcomplexes with both A plus T components can also be isolated. This complex interacts with at least 2 substrate-specific components, BioY and RibU.</text>
</comment>
<comment type="interaction">
    <interactant intactId="EBI-16160779">
        <id>Q9WY65</id>
    </interactant>
    <interactant intactId="EBI-16160756">
        <id>Q9X1Z1</id>
        <label>ecfA1</label>
    </interactant>
    <organismsDiffer>false</organismsDiffer>
    <experiments>2</experiments>
</comment>
<comment type="subcellular location">
    <subcellularLocation>
        <location evidence="5">Cell inner membrane</location>
        <topology evidence="5">Peripheral membrane protein</topology>
    </subcellularLocation>
</comment>
<comment type="miscellaneous">
    <text>Structure 4HLU is probably in the open state.</text>
</comment>
<comment type="similarity">
    <text evidence="4">Belongs to the ABC transporter superfamily. Energy-coupling factor EcfA family.</text>
</comment>
<feature type="chain" id="PRO_0000092115" description="Energy-coupling factor transporter ATP-binding protein EcfA2">
    <location>
        <begin position="1"/>
        <end position="266"/>
    </location>
</feature>
<feature type="domain" description="ABC transporter" evidence="2">
    <location>
        <begin position="3"/>
        <end position="238"/>
    </location>
</feature>
<feature type="region of interest" description="Required for heterodimer formation">
    <location>
        <begin position="220"/>
        <end position="266"/>
    </location>
</feature>
<feature type="active site" description="Proton acceptor" evidence="1">
    <location>
        <position position="164"/>
    </location>
</feature>
<feature type="binding site">
    <location>
        <begin position="43"/>
        <end position="48"/>
    </location>
    <ligand>
        <name>ATP</name>
        <dbReference type="ChEBI" id="CHEBI:30616"/>
    </ligand>
</feature>
<feature type="strand" evidence="6">
    <location>
        <begin position="3"/>
        <end position="13"/>
    </location>
</feature>
<feature type="strand" evidence="6">
    <location>
        <begin position="20"/>
        <end position="30"/>
    </location>
</feature>
<feature type="strand" evidence="6">
    <location>
        <begin position="35"/>
        <end position="39"/>
    </location>
</feature>
<feature type="strand" evidence="8">
    <location>
        <begin position="42"/>
        <end position="44"/>
    </location>
</feature>
<feature type="helix" evidence="6">
    <location>
        <begin position="46"/>
        <end position="53"/>
    </location>
</feature>
<feature type="strand" evidence="6">
    <location>
        <begin position="60"/>
        <end position="66"/>
    </location>
</feature>
<feature type="helix" evidence="6">
    <location>
        <begin position="73"/>
        <end position="76"/>
    </location>
</feature>
<feature type="helix" evidence="6">
    <location>
        <begin position="77"/>
        <end position="79"/>
    </location>
</feature>
<feature type="strand" evidence="6">
    <location>
        <begin position="80"/>
        <end position="83"/>
    </location>
</feature>
<feature type="helix" evidence="6">
    <location>
        <begin position="87"/>
        <end position="90"/>
    </location>
</feature>
<feature type="helix" evidence="6">
    <location>
        <begin position="96"/>
        <end position="102"/>
    </location>
</feature>
<feature type="turn" evidence="6">
    <location>
        <begin position="103"/>
        <end position="107"/>
    </location>
</feature>
<feature type="helix" evidence="6">
    <location>
        <begin position="114"/>
        <end position="123"/>
    </location>
</feature>
<feature type="helix" evidence="6">
    <location>
        <begin position="128"/>
        <end position="131"/>
    </location>
</feature>
<feature type="helix" evidence="6">
    <location>
        <begin position="136"/>
        <end position="138"/>
    </location>
</feature>
<feature type="helix" evidence="6">
    <location>
        <begin position="141"/>
        <end position="153"/>
    </location>
</feature>
<feature type="strand" evidence="6">
    <location>
        <begin position="158"/>
        <end position="164"/>
    </location>
</feature>
<feature type="turn" evidence="6">
    <location>
        <begin position="165"/>
        <end position="168"/>
    </location>
</feature>
<feature type="helix" evidence="6">
    <location>
        <begin position="171"/>
        <end position="186"/>
    </location>
</feature>
<feature type="strand" evidence="6">
    <location>
        <begin position="190"/>
        <end position="194"/>
    </location>
</feature>
<feature type="turn" evidence="6">
    <location>
        <begin position="199"/>
        <end position="201"/>
    </location>
</feature>
<feature type="helix" evidence="6">
    <location>
        <begin position="202"/>
        <end position="204"/>
    </location>
</feature>
<feature type="strand" evidence="6">
    <location>
        <begin position="206"/>
        <end position="212"/>
    </location>
</feature>
<feature type="strand" evidence="6">
    <location>
        <begin position="215"/>
        <end position="221"/>
    </location>
</feature>
<feature type="helix" evidence="6">
    <location>
        <begin position="222"/>
        <end position="228"/>
    </location>
</feature>
<feature type="helix" evidence="7">
    <location>
        <begin position="231"/>
        <end position="233"/>
    </location>
</feature>
<feature type="helix" evidence="6">
    <location>
        <begin position="236"/>
        <end position="243"/>
    </location>
</feature>
<feature type="turn" evidence="6">
    <location>
        <begin position="244"/>
        <end position="247"/>
    </location>
</feature>
<feature type="strand" evidence="6">
    <location>
        <begin position="252"/>
        <end position="254"/>
    </location>
</feature>
<feature type="helix" evidence="6">
    <location>
        <begin position="257"/>
        <end position="260"/>
    </location>
</feature>
<feature type="turn" evidence="6">
    <location>
        <begin position="261"/>
        <end position="263"/>
    </location>
</feature>
<keyword id="KW-0002">3D-structure</keyword>
<keyword id="KW-0067">ATP-binding</keyword>
<keyword id="KW-0997">Cell inner membrane</keyword>
<keyword id="KW-1003">Cell membrane</keyword>
<keyword id="KW-0472">Membrane</keyword>
<keyword id="KW-0547">Nucleotide-binding</keyword>
<keyword id="KW-1185">Reference proteome</keyword>
<keyword id="KW-1278">Translocase</keyword>
<keyword id="KW-0813">Transport</keyword>
<evidence type="ECO:0000250" key="1"/>
<evidence type="ECO:0000255" key="2">
    <source>
        <dbReference type="PROSITE-ProRule" id="PRU00434"/>
    </source>
</evidence>
<evidence type="ECO:0000269" key="3">
    <source>
    </source>
</evidence>
<evidence type="ECO:0000305" key="4"/>
<evidence type="ECO:0000305" key="5">
    <source>
    </source>
</evidence>
<evidence type="ECO:0007829" key="6">
    <source>
        <dbReference type="PDB" id="2YZ2"/>
    </source>
</evidence>
<evidence type="ECO:0007829" key="7">
    <source>
        <dbReference type="PDB" id="4HLU"/>
    </source>
</evidence>
<evidence type="ECO:0007829" key="8">
    <source>
        <dbReference type="PDB" id="4ZIR"/>
    </source>
</evidence>